<reference key="1">
    <citation type="journal article" date="2002" name="Biochim. Biophys. Acta">
        <title>Chondrocyte protein with a poly-proline region is a novel protein expressed by chondrocytes in vitro and in vivo.</title>
        <authorList>
            <person name="Tonachini L."/>
            <person name="Monticone M."/>
            <person name="Di Marco E."/>
            <person name="Zerega B."/>
            <person name="Cancedda R."/>
            <person name="Castagnola P."/>
        </authorList>
    </citation>
    <scope>NUCLEOTIDE SEQUENCE [MRNA]</scope>
    <scope>TISSUE SPECIFICITY</scope>
</reference>
<reference key="2">
    <citation type="journal article" date="2004" name="Nature">
        <title>Sequence and comparative analysis of the chicken genome provide unique perspectives on vertebrate evolution.</title>
        <authorList>
            <person name="Hillier L.W."/>
            <person name="Miller W."/>
            <person name="Birney E."/>
            <person name="Warren W."/>
            <person name="Hardison R.C."/>
            <person name="Ponting C.P."/>
            <person name="Bork P."/>
            <person name="Burt D.W."/>
            <person name="Groenen M.A.M."/>
            <person name="Delany M.E."/>
            <person name="Dodgson J.B."/>
            <person name="Chinwalla A.T."/>
            <person name="Cliften P.F."/>
            <person name="Clifton S.W."/>
            <person name="Delehaunty K.D."/>
            <person name="Fronick C."/>
            <person name="Fulton R.S."/>
            <person name="Graves T.A."/>
            <person name="Kremitzki C."/>
            <person name="Layman D."/>
            <person name="Magrini V."/>
            <person name="McPherson J.D."/>
            <person name="Miner T.L."/>
            <person name="Minx P."/>
            <person name="Nash W.E."/>
            <person name="Nhan M.N."/>
            <person name="Nelson J.O."/>
            <person name="Oddy L.G."/>
            <person name="Pohl C.S."/>
            <person name="Randall-Maher J."/>
            <person name="Smith S.M."/>
            <person name="Wallis J.W."/>
            <person name="Yang S.-P."/>
            <person name="Romanov M.N."/>
            <person name="Rondelli C.M."/>
            <person name="Paton B."/>
            <person name="Smith J."/>
            <person name="Morrice D."/>
            <person name="Daniels L."/>
            <person name="Tempest H.G."/>
            <person name="Robertson L."/>
            <person name="Masabanda J.S."/>
            <person name="Griffin D.K."/>
            <person name="Vignal A."/>
            <person name="Fillon V."/>
            <person name="Jacobbson L."/>
            <person name="Kerje S."/>
            <person name="Andersson L."/>
            <person name="Crooijmans R.P."/>
            <person name="Aerts J."/>
            <person name="van der Poel J.J."/>
            <person name="Ellegren H."/>
            <person name="Caldwell R.B."/>
            <person name="Hubbard S.J."/>
            <person name="Grafham D.V."/>
            <person name="Kierzek A.M."/>
            <person name="McLaren S.R."/>
            <person name="Overton I.M."/>
            <person name="Arakawa H."/>
            <person name="Beattie K.J."/>
            <person name="Bezzubov Y."/>
            <person name="Boardman P.E."/>
            <person name="Bonfield J.K."/>
            <person name="Croning M.D.R."/>
            <person name="Davies R.M."/>
            <person name="Francis M.D."/>
            <person name="Humphray S.J."/>
            <person name="Scott C.E."/>
            <person name="Taylor R.G."/>
            <person name="Tickle C."/>
            <person name="Brown W.R.A."/>
            <person name="Rogers J."/>
            <person name="Buerstedde J.-M."/>
            <person name="Wilson S.A."/>
            <person name="Stubbs L."/>
            <person name="Ovcharenko I."/>
            <person name="Gordon L."/>
            <person name="Lucas S."/>
            <person name="Miller M.M."/>
            <person name="Inoko H."/>
            <person name="Shiina T."/>
            <person name="Kaufman J."/>
            <person name="Salomonsen J."/>
            <person name="Skjoedt K."/>
            <person name="Wong G.K.-S."/>
            <person name="Wang J."/>
            <person name="Liu B."/>
            <person name="Wang J."/>
            <person name="Yu J."/>
            <person name="Yang H."/>
            <person name="Nefedov M."/>
            <person name="Koriabine M."/>
            <person name="Dejong P.J."/>
            <person name="Goodstadt L."/>
            <person name="Webber C."/>
            <person name="Dickens N.J."/>
            <person name="Letunic I."/>
            <person name="Suyama M."/>
            <person name="Torrents D."/>
            <person name="von Mering C."/>
            <person name="Zdobnov E.M."/>
            <person name="Makova K."/>
            <person name="Nekrutenko A."/>
            <person name="Elnitski L."/>
            <person name="Eswara P."/>
            <person name="King D.C."/>
            <person name="Yang S.-P."/>
            <person name="Tyekucheva S."/>
            <person name="Radakrishnan A."/>
            <person name="Harris R.S."/>
            <person name="Chiaromonte F."/>
            <person name="Taylor J."/>
            <person name="He J."/>
            <person name="Rijnkels M."/>
            <person name="Griffiths-Jones S."/>
            <person name="Ureta-Vidal A."/>
            <person name="Hoffman M.M."/>
            <person name="Severin J."/>
            <person name="Searle S.M.J."/>
            <person name="Law A.S."/>
            <person name="Speed D."/>
            <person name="Waddington D."/>
            <person name="Cheng Z."/>
            <person name="Tuzun E."/>
            <person name="Eichler E."/>
            <person name="Bao Z."/>
            <person name="Flicek P."/>
            <person name="Shteynberg D.D."/>
            <person name="Brent M.R."/>
            <person name="Bye J.M."/>
            <person name="Huckle E.J."/>
            <person name="Chatterji S."/>
            <person name="Dewey C."/>
            <person name="Pachter L."/>
            <person name="Kouranov A."/>
            <person name="Mourelatos Z."/>
            <person name="Hatzigeorgiou A.G."/>
            <person name="Paterson A.H."/>
            <person name="Ivarie R."/>
            <person name="Brandstrom M."/>
            <person name="Axelsson E."/>
            <person name="Backstrom N."/>
            <person name="Berlin S."/>
            <person name="Webster M.T."/>
            <person name="Pourquie O."/>
            <person name="Reymond A."/>
            <person name="Ucla C."/>
            <person name="Antonarakis S.E."/>
            <person name="Long M."/>
            <person name="Emerson J.J."/>
            <person name="Betran E."/>
            <person name="Dupanloup I."/>
            <person name="Kaessmann H."/>
            <person name="Hinrichs A.S."/>
            <person name="Bejerano G."/>
            <person name="Furey T.S."/>
            <person name="Harte R.A."/>
            <person name="Raney B."/>
            <person name="Siepel A."/>
            <person name="Kent W.J."/>
            <person name="Haussler D."/>
            <person name="Eyras E."/>
            <person name="Castelo R."/>
            <person name="Abril J.F."/>
            <person name="Castellano S."/>
            <person name="Camara F."/>
            <person name="Parra G."/>
            <person name="Guigo R."/>
            <person name="Bourque G."/>
            <person name="Tesler G."/>
            <person name="Pevzner P.A."/>
            <person name="Smit A."/>
            <person name="Fulton L.A."/>
            <person name="Mardis E.R."/>
            <person name="Wilson R.K."/>
        </authorList>
    </citation>
    <scope>NUCLEOTIDE SEQUENCE [LARGE SCALE GENOMIC DNA]</scope>
    <source>
        <strain>Red jungle fowl</strain>
    </source>
</reference>
<reference key="3">
    <citation type="journal article" date="2004" name="J. Cell. Physiol.">
        <title>Chondrocyte protein with a poly-proline region (CHPPR) is a novel mitochondrial protein and promotes mitochondrial fission.</title>
        <authorList>
            <person name="Tonachini L."/>
            <person name="Monticone M."/>
            <person name="Puri C."/>
            <person name="Tacchetti C."/>
            <person name="Pinton P."/>
            <person name="Rizzuto R."/>
            <person name="Cancedda R."/>
            <person name="Tavella S."/>
            <person name="Castagnola P."/>
        </authorList>
    </citation>
    <scope>FUNCTION IN MITOCHONDRIAL FISSION</scope>
    <scope>SUBCELLULAR LOCATION</scope>
</reference>
<sequence>MIRWFKCFMRMIFEQVGLNMESVLWSSKPYGSSRSIVRKIGTNLSLIQCPRVQFQLTSQAAEGNHPHQFREDAVASFADVGWVAQEEGEVSTRLRSEVWSKTAQPLPGELHQPGHSLGRQDSVPNLLHEEPAPRSTVIANEEAMQKISALENELATLRAQIAKIVILQEQQNLTAAGLSPVASAAVPCVPPPPPPPPPPPLPPPALQQSMSAIELIRERKNRKTNSGPIPTENGPKKPEIPNMLEILKDMNSVKLRSVKKSSGDTKPKVADPTDPAALIAEALKKKFAYRYRRDSQSESDKVIPKSETNTKTEVVLFGPHMLKSTGKMKTLIEKS</sequence>
<protein>
    <recommendedName>
        <fullName>Mitochondrial fission regulator 1</fullName>
    </recommendedName>
    <alternativeName>
        <fullName>Chondrocyte protein with a poly-proline region</fullName>
    </alternativeName>
</protein>
<evidence type="ECO:0000255" key="1"/>
<evidence type="ECO:0000256" key="2">
    <source>
        <dbReference type="SAM" id="MobiDB-lite"/>
    </source>
</evidence>
<evidence type="ECO:0000269" key="3">
    <source>
    </source>
</evidence>
<evidence type="ECO:0000269" key="4">
    <source>
    </source>
</evidence>
<evidence type="ECO:0000305" key="5"/>
<name>MTFR1_CHICK</name>
<keyword id="KW-0175">Coiled coil</keyword>
<keyword id="KW-0496">Mitochondrion</keyword>
<keyword id="KW-1185">Reference proteome</keyword>
<keyword id="KW-0809">Transit peptide</keyword>
<organism>
    <name type="scientific">Gallus gallus</name>
    <name type="common">Chicken</name>
    <dbReference type="NCBI Taxonomy" id="9031"/>
    <lineage>
        <taxon>Eukaryota</taxon>
        <taxon>Metazoa</taxon>
        <taxon>Chordata</taxon>
        <taxon>Craniata</taxon>
        <taxon>Vertebrata</taxon>
        <taxon>Euteleostomi</taxon>
        <taxon>Archelosauria</taxon>
        <taxon>Archosauria</taxon>
        <taxon>Dinosauria</taxon>
        <taxon>Saurischia</taxon>
        <taxon>Theropoda</taxon>
        <taxon>Coelurosauria</taxon>
        <taxon>Aves</taxon>
        <taxon>Neognathae</taxon>
        <taxon>Galloanserae</taxon>
        <taxon>Galliformes</taxon>
        <taxon>Phasianidae</taxon>
        <taxon>Phasianinae</taxon>
        <taxon>Gallus</taxon>
    </lineage>
</organism>
<accession>Q9PTD5</accession>
<accession>F1NUU1</accession>
<dbReference type="EMBL" id="AF208489">
    <property type="protein sequence ID" value="AAF21014.1"/>
    <property type="status" value="ALT_FRAME"/>
    <property type="molecule type" value="mRNA"/>
</dbReference>
<dbReference type="EMBL" id="AADN02022210">
    <property type="status" value="NOT_ANNOTATED_CDS"/>
    <property type="molecule type" value="Genomic_DNA"/>
</dbReference>
<dbReference type="EMBL" id="AADN02022211">
    <property type="status" value="NOT_ANNOTATED_CDS"/>
    <property type="molecule type" value="Genomic_DNA"/>
</dbReference>
<dbReference type="EMBL" id="AADN02022212">
    <property type="status" value="NOT_ANNOTATED_CDS"/>
    <property type="molecule type" value="Genomic_DNA"/>
</dbReference>
<dbReference type="EMBL" id="AADN02022213">
    <property type="status" value="NOT_ANNOTATED_CDS"/>
    <property type="molecule type" value="Genomic_DNA"/>
</dbReference>
<dbReference type="EMBL" id="AADN02022214">
    <property type="status" value="NOT_ANNOTATED_CDS"/>
    <property type="molecule type" value="Genomic_DNA"/>
</dbReference>
<dbReference type="EMBL" id="AADN02022215">
    <property type="status" value="NOT_ANNOTATED_CDS"/>
    <property type="molecule type" value="Genomic_DNA"/>
</dbReference>
<dbReference type="EMBL" id="AADN02073341">
    <property type="status" value="NOT_ANNOTATED_CDS"/>
    <property type="molecule type" value="Genomic_DNA"/>
</dbReference>
<dbReference type="RefSeq" id="NP_989874.2">
    <property type="nucleotide sequence ID" value="NM_204543.3"/>
</dbReference>
<dbReference type="RefSeq" id="XP_015138206.1">
    <property type="nucleotide sequence ID" value="XM_015282720.1"/>
</dbReference>
<dbReference type="RefSeq" id="XP_015138207.1">
    <property type="nucleotide sequence ID" value="XM_015282721.4"/>
</dbReference>
<dbReference type="RefSeq" id="XP_015138208.1">
    <property type="nucleotide sequence ID" value="XM_015282722.4"/>
</dbReference>
<dbReference type="RefSeq" id="XP_015138209.1">
    <property type="nucleotide sequence ID" value="XM_015282723.4"/>
</dbReference>
<dbReference type="RefSeq" id="XP_015138210.1">
    <property type="nucleotide sequence ID" value="XM_015282724.4"/>
</dbReference>
<dbReference type="RefSeq" id="XP_015138211.1">
    <property type="nucleotide sequence ID" value="XM_015282725.1"/>
</dbReference>
<dbReference type="RefSeq" id="XP_025002789.1">
    <property type="nucleotide sequence ID" value="XM_025147021.3"/>
</dbReference>
<dbReference type="RefSeq" id="XP_040531068.1">
    <property type="nucleotide sequence ID" value="XM_040675134.2"/>
</dbReference>
<dbReference type="RefSeq" id="XP_046766235.1">
    <property type="nucleotide sequence ID" value="XM_046910279.1"/>
</dbReference>
<dbReference type="RefSeq" id="XP_046766236.1">
    <property type="nucleotide sequence ID" value="XM_046910280.1"/>
</dbReference>
<dbReference type="RefSeq" id="XP_046766237.1">
    <property type="nucleotide sequence ID" value="XM_046910281.1"/>
</dbReference>
<dbReference type="RefSeq" id="XP_046766238.1">
    <property type="nucleotide sequence ID" value="XM_046910282.1"/>
</dbReference>
<dbReference type="RefSeq" id="XP_046766239.1">
    <property type="nucleotide sequence ID" value="XM_046910283.1"/>
</dbReference>
<dbReference type="RefSeq" id="XP_046766240.1">
    <property type="nucleotide sequence ID" value="XM_046910284.1"/>
</dbReference>
<dbReference type="RefSeq" id="XP_046766241.1">
    <property type="nucleotide sequence ID" value="XM_046910285.1"/>
</dbReference>
<dbReference type="RefSeq" id="XP_046773582.1">
    <property type="nucleotide sequence ID" value="XM_046917626.1"/>
</dbReference>
<dbReference type="SMR" id="Q9PTD5"/>
<dbReference type="FunCoup" id="Q9PTD5">
    <property type="interactions" value="477"/>
</dbReference>
<dbReference type="PaxDb" id="9031-ENSGALP00000007799"/>
<dbReference type="Ensembl" id="ENSGALT00010007345.1">
    <property type="protein sequence ID" value="ENSGALP00010004399.1"/>
    <property type="gene ID" value="ENSGALG00010003154.1"/>
</dbReference>
<dbReference type="GeneID" id="395222"/>
<dbReference type="KEGG" id="gga:395222"/>
<dbReference type="CTD" id="9650"/>
<dbReference type="VEuPathDB" id="HostDB:geneid_395222"/>
<dbReference type="eggNOG" id="ENOG502QSSN">
    <property type="taxonomic scope" value="Eukaryota"/>
</dbReference>
<dbReference type="GeneTree" id="ENSGT00950000183215"/>
<dbReference type="HOGENOM" id="CLU_059135_0_0_1"/>
<dbReference type="InParanoid" id="Q9PTD5"/>
<dbReference type="OMA" id="CPRIHFQ"/>
<dbReference type="OrthoDB" id="2133332at2759"/>
<dbReference type="TreeFam" id="TF331404"/>
<dbReference type="PRO" id="PR:Q9PTD5"/>
<dbReference type="Proteomes" id="UP000000539">
    <property type="component" value="Chromosome 2"/>
</dbReference>
<dbReference type="Bgee" id="ENSGALG00000038385">
    <property type="expression patterns" value="Expressed in testis and 14 other cell types or tissues"/>
</dbReference>
<dbReference type="GO" id="GO:0005739">
    <property type="term" value="C:mitochondrion"/>
    <property type="evidence" value="ECO:0000314"/>
    <property type="project" value="UniProtKB"/>
</dbReference>
<dbReference type="GO" id="GO:0009060">
    <property type="term" value="P:aerobic respiration"/>
    <property type="evidence" value="ECO:0000250"/>
    <property type="project" value="UniProtKB"/>
</dbReference>
<dbReference type="GO" id="GO:0000266">
    <property type="term" value="P:mitochondrial fission"/>
    <property type="evidence" value="ECO:0000314"/>
    <property type="project" value="UniProtKB"/>
</dbReference>
<dbReference type="GO" id="GO:0007005">
    <property type="term" value="P:mitochondrion organization"/>
    <property type="evidence" value="ECO:0000314"/>
    <property type="project" value="UniProtKB"/>
</dbReference>
<dbReference type="InterPro" id="IPR007972">
    <property type="entry name" value="Mtfr1"/>
</dbReference>
<dbReference type="PANTHER" id="PTHR14215:SF1">
    <property type="entry name" value="MITOCHONDRIAL FISSION REGULATOR 1"/>
    <property type="match status" value="1"/>
</dbReference>
<dbReference type="PANTHER" id="PTHR14215">
    <property type="entry name" value="PROTEIN OF UNKNOWN FUNCTION DUF729"/>
    <property type="match status" value="1"/>
</dbReference>
<dbReference type="Pfam" id="PF05308">
    <property type="entry name" value="Mito_fiss_reg"/>
    <property type="match status" value="1"/>
</dbReference>
<gene>
    <name type="primary">MTFR1</name>
    <name type="synonym">CHPPR</name>
</gene>
<feature type="transit peptide" description="Mitochondrion" evidence="1">
    <location>
        <begin position="1"/>
        <end position="48"/>
    </location>
</feature>
<feature type="chain" id="PRO_0000417556" description="Mitochondrial fission regulator 1">
    <location>
        <begin position="49"/>
        <end position="335"/>
    </location>
</feature>
<feature type="region of interest" description="Necessary and sufficient to promote mitochondrial fission">
    <location>
        <begin position="182"/>
        <end position="309"/>
    </location>
</feature>
<feature type="region of interest" description="Disordered" evidence="2">
    <location>
        <begin position="219"/>
        <end position="240"/>
    </location>
</feature>
<feature type="coiled-coil region" evidence="1">
    <location>
        <begin position="134"/>
        <end position="170"/>
    </location>
</feature>
<feature type="sequence conflict" description="In Ref. 1; AAF21014." evidence="5" ref="1">
    <original>A</original>
    <variation>T</variation>
    <location>
        <position position="61"/>
    </location>
</feature>
<proteinExistence type="evidence at protein level"/>
<comment type="function">
    <text evidence="4">May play a role in mitochondrial aerobic respiration. May also regulate mitochondrial organization and fission.</text>
</comment>
<comment type="subcellular location">
    <subcellularLocation>
        <location evidence="4">Mitochondrion</location>
    </subcellularLocation>
    <text>May be associated with the inner and the outer mitochondrial membrane.</text>
</comment>
<comment type="tissue specificity">
    <text evidence="3">Widely expressed in embryonic tissues with higher expression in cartilage and hypertrophic chondrocytes. Specifically expressed in hypertrophic chondrocytes (at protein level).</text>
</comment>
<comment type="similarity">
    <text evidence="5">Belongs to the MTFR1 family.</text>
</comment>
<comment type="sequence caution" evidence="5">
    <conflict type="frameshift">
        <sequence resource="EMBL-CDS" id="AAF21014"/>
    </conflict>
</comment>